<dbReference type="EC" id="6.3.4.20" evidence="1"/>
<dbReference type="EMBL" id="CP000323">
    <property type="protein sequence ID" value="ABE74560.1"/>
    <property type="molecule type" value="Genomic_DNA"/>
</dbReference>
<dbReference type="RefSeq" id="WP_011513124.1">
    <property type="nucleotide sequence ID" value="NC_007969.1"/>
</dbReference>
<dbReference type="SMR" id="Q1QCP3"/>
<dbReference type="STRING" id="335284.Pcryo_0777"/>
<dbReference type="KEGG" id="pcr:Pcryo_0777"/>
<dbReference type="eggNOG" id="COG0603">
    <property type="taxonomic scope" value="Bacteria"/>
</dbReference>
<dbReference type="HOGENOM" id="CLU_081854_1_0_6"/>
<dbReference type="UniPathway" id="UPA00391"/>
<dbReference type="Proteomes" id="UP000002425">
    <property type="component" value="Chromosome"/>
</dbReference>
<dbReference type="GO" id="GO:0005524">
    <property type="term" value="F:ATP binding"/>
    <property type="evidence" value="ECO:0007669"/>
    <property type="project" value="UniProtKB-UniRule"/>
</dbReference>
<dbReference type="GO" id="GO:0016879">
    <property type="term" value="F:ligase activity, forming carbon-nitrogen bonds"/>
    <property type="evidence" value="ECO:0007669"/>
    <property type="project" value="UniProtKB-UniRule"/>
</dbReference>
<dbReference type="GO" id="GO:0008270">
    <property type="term" value="F:zinc ion binding"/>
    <property type="evidence" value="ECO:0007669"/>
    <property type="project" value="UniProtKB-UniRule"/>
</dbReference>
<dbReference type="GO" id="GO:0008616">
    <property type="term" value="P:queuosine biosynthetic process"/>
    <property type="evidence" value="ECO:0007669"/>
    <property type="project" value="UniProtKB-UniRule"/>
</dbReference>
<dbReference type="CDD" id="cd01995">
    <property type="entry name" value="QueC-like"/>
    <property type="match status" value="1"/>
</dbReference>
<dbReference type="Gene3D" id="3.40.50.620">
    <property type="entry name" value="HUPs"/>
    <property type="match status" value="1"/>
</dbReference>
<dbReference type="HAMAP" id="MF_01633">
    <property type="entry name" value="QueC"/>
    <property type="match status" value="1"/>
</dbReference>
<dbReference type="InterPro" id="IPR018317">
    <property type="entry name" value="QueC"/>
</dbReference>
<dbReference type="InterPro" id="IPR014729">
    <property type="entry name" value="Rossmann-like_a/b/a_fold"/>
</dbReference>
<dbReference type="NCBIfam" id="TIGR00364">
    <property type="entry name" value="7-cyano-7-deazaguanine synthase QueC"/>
    <property type="match status" value="1"/>
</dbReference>
<dbReference type="PANTHER" id="PTHR42914">
    <property type="entry name" value="7-CYANO-7-DEAZAGUANINE SYNTHASE"/>
    <property type="match status" value="1"/>
</dbReference>
<dbReference type="PANTHER" id="PTHR42914:SF1">
    <property type="entry name" value="7-CYANO-7-DEAZAGUANINE SYNTHASE"/>
    <property type="match status" value="1"/>
</dbReference>
<dbReference type="Pfam" id="PF06508">
    <property type="entry name" value="QueC"/>
    <property type="match status" value="1"/>
</dbReference>
<dbReference type="PIRSF" id="PIRSF006293">
    <property type="entry name" value="ExsB"/>
    <property type="match status" value="1"/>
</dbReference>
<dbReference type="SUPFAM" id="SSF52402">
    <property type="entry name" value="Adenine nucleotide alpha hydrolases-like"/>
    <property type="match status" value="1"/>
</dbReference>
<feature type="chain" id="PRO_0000246894" description="7-cyano-7-deazaguanine synthase">
    <location>
        <begin position="1"/>
        <end position="259"/>
    </location>
</feature>
<feature type="binding site" evidence="1">
    <location>
        <begin position="32"/>
        <end position="42"/>
    </location>
    <ligand>
        <name>ATP</name>
        <dbReference type="ChEBI" id="CHEBI:30616"/>
    </ligand>
</feature>
<feature type="binding site" evidence="1">
    <location>
        <position position="223"/>
    </location>
    <ligand>
        <name>Zn(2+)</name>
        <dbReference type="ChEBI" id="CHEBI:29105"/>
    </ligand>
</feature>
<feature type="binding site" evidence="1">
    <location>
        <position position="233"/>
    </location>
    <ligand>
        <name>Zn(2+)</name>
        <dbReference type="ChEBI" id="CHEBI:29105"/>
    </ligand>
</feature>
<feature type="binding site" evidence="1">
    <location>
        <position position="236"/>
    </location>
    <ligand>
        <name>Zn(2+)</name>
        <dbReference type="ChEBI" id="CHEBI:29105"/>
    </ligand>
</feature>
<feature type="binding site" evidence="1">
    <location>
        <position position="239"/>
    </location>
    <ligand>
        <name>Zn(2+)</name>
        <dbReference type="ChEBI" id="CHEBI:29105"/>
    </ligand>
</feature>
<evidence type="ECO:0000255" key="1">
    <source>
        <dbReference type="HAMAP-Rule" id="MF_01633"/>
    </source>
</evidence>
<comment type="function">
    <text evidence="1">Catalyzes the ATP-dependent conversion of 7-carboxy-7-deazaguanine (CDG) to 7-cyano-7-deazaguanine (preQ(0)).</text>
</comment>
<comment type="catalytic activity">
    <reaction evidence="1">
        <text>7-carboxy-7-deazaguanine + NH4(+) + ATP = 7-cyano-7-deazaguanine + ADP + phosphate + H2O + H(+)</text>
        <dbReference type="Rhea" id="RHEA:27982"/>
        <dbReference type="ChEBI" id="CHEBI:15377"/>
        <dbReference type="ChEBI" id="CHEBI:15378"/>
        <dbReference type="ChEBI" id="CHEBI:28938"/>
        <dbReference type="ChEBI" id="CHEBI:30616"/>
        <dbReference type="ChEBI" id="CHEBI:43474"/>
        <dbReference type="ChEBI" id="CHEBI:45075"/>
        <dbReference type="ChEBI" id="CHEBI:61036"/>
        <dbReference type="ChEBI" id="CHEBI:456216"/>
        <dbReference type="EC" id="6.3.4.20"/>
    </reaction>
</comment>
<comment type="cofactor">
    <cofactor evidence="1">
        <name>Zn(2+)</name>
        <dbReference type="ChEBI" id="CHEBI:29105"/>
    </cofactor>
    <text evidence="1">Binds 1 zinc ion per subunit.</text>
</comment>
<comment type="pathway">
    <text evidence="1">Purine metabolism; 7-cyano-7-deazaguanine biosynthesis.</text>
</comment>
<comment type="similarity">
    <text evidence="1">Belongs to the QueC family.</text>
</comment>
<proteinExistence type="inferred from homology"/>
<organism>
    <name type="scientific">Psychrobacter cryohalolentis (strain ATCC BAA-1226 / DSM 17306 / VKM B-2378 / K5)</name>
    <dbReference type="NCBI Taxonomy" id="335284"/>
    <lineage>
        <taxon>Bacteria</taxon>
        <taxon>Pseudomonadati</taxon>
        <taxon>Pseudomonadota</taxon>
        <taxon>Gammaproteobacteria</taxon>
        <taxon>Moraxellales</taxon>
        <taxon>Moraxellaceae</taxon>
        <taxon>Psychrobacter</taxon>
    </lineage>
</organism>
<sequence>MTNTALPTSSADQENDTQLNELHKSQNAVVLLSGGLDSVTCLYWAKARYASVTAVSFDYGQRHNSELVAAKAIAETAGVNHRIIDIDIAQLGGSSLTDHSMIVPDGDTDKFPDKKRDEIDNDAIPNTYVPARNTIFLSYALAVAEVTDSNHIVIGVSSVDYSGYPDCRPEYIAAFQHMANLATKAGVTGHHLSIQTPLQQLSKAKTIELGLSLGVDYGQTISCYQADANGLACGVCDSCALRRQGFAQAGVADPTHYQS</sequence>
<protein>
    <recommendedName>
        <fullName evidence="1">7-cyano-7-deazaguanine synthase</fullName>
        <ecNumber evidence="1">6.3.4.20</ecNumber>
    </recommendedName>
    <alternativeName>
        <fullName evidence="1">7-cyano-7-carbaguanine synthase</fullName>
    </alternativeName>
    <alternativeName>
        <fullName evidence="1">PreQ(0) synthase</fullName>
    </alternativeName>
    <alternativeName>
        <fullName evidence="1">Queuosine biosynthesis protein QueC</fullName>
    </alternativeName>
</protein>
<name>QUEC_PSYCK</name>
<reference key="1">
    <citation type="submission" date="2006-03" db="EMBL/GenBank/DDBJ databases">
        <title>Complete sequence of chromosome of Psychrobacter cryohalolentis K5.</title>
        <authorList>
            <consortium name="US DOE Joint Genome Institute"/>
            <person name="Copeland A."/>
            <person name="Lucas S."/>
            <person name="Lapidus A."/>
            <person name="Barry K."/>
            <person name="Detter J.C."/>
            <person name="Glavina T."/>
            <person name="Hammon N."/>
            <person name="Israni S."/>
            <person name="Dalin E."/>
            <person name="Tice H."/>
            <person name="Pitluck S."/>
            <person name="Brettin T."/>
            <person name="Bruce D."/>
            <person name="Han C."/>
            <person name="Tapia R."/>
            <person name="Sims D.R."/>
            <person name="Gilna P."/>
            <person name="Schmutz J."/>
            <person name="Larimer F."/>
            <person name="Land M."/>
            <person name="Hauser L."/>
            <person name="Kyrpides N."/>
            <person name="Kim E."/>
            <person name="Richardson P."/>
        </authorList>
    </citation>
    <scope>NUCLEOTIDE SEQUENCE [LARGE SCALE GENOMIC DNA]</scope>
    <source>
        <strain>ATCC BAA-1226 / DSM 17306 / VKM B-2378 / K5</strain>
    </source>
</reference>
<gene>
    <name evidence="1" type="primary">queC</name>
    <name type="ordered locus">Pcryo_0777</name>
</gene>
<accession>Q1QCP3</accession>
<keyword id="KW-0067">ATP-binding</keyword>
<keyword id="KW-0436">Ligase</keyword>
<keyword id="KW-0479">Metal-binding</keyword>
<keyword id="KW-0547">Nucleotide-binding</keyword>
<keyword id="KW-0671">Queuosine biosynthesis</keyword>
<keyword id="KW-0862">Zinc</keyword>